<comment type="function">
    <text evidence="1">The coatomer is a cytosolic protein complex that binds to dilysine motifs and reversibly associates with Golgi non-clathrin-coated vesicles, which further mediate biosynthetic protein transport from the ER, via the Golgi up to the trans Golgi network. Coatomer complex is required for budding from Golgi membranes, and is essential for the retrograde Golgi-to-ER transport of dilysine-tagged proteins (By similarity).</text>
</comment>
<comment type="subunit">
    <text evidence="1">Oligomeric complex that consists of at least the alpha, beta, beta', gamma, delta, epsilon and zeta subunits.</text>
</comment>
<comment type="subcellular location">
    <subcellularLocation>
        <location evidence="1">Cytoplasm</location>
    </subcellularLocation>
    <subcellularLocation>
        <location evidence="1">Golgi apparatus membrane</location>
        <topology evidence="1">Peripheral membrane protein</topology>
        <orientation evidence="1">Cytoplasmic side</orientation>
    </subcellularLocation>
</comment>
<feature type="chain" id="PRO_0000327495" description="Coatomer subunit alpha">
    <location>
        <begin position="1"/>
        <end position="1221"/>
    </location>
</feature>
<feature type="repeat" description="WD 1">
    <location>
        <begin position="7"/>
        <end position="46"/>
    </location>
</feature>
<feature type="repeat" description="WD 2">
    <location>
        <begin position="49"/>
        <end position="88"/>
    </location>
</feature>
<feature type="repeat" description="WD 3">
    <location>
        <begin position="91"/>
        <end position="130"/>
    </location>
</feature>
<feature type="repeat" description="WD 4">
    <location>
        <begin position="133"/>
        <end position="172"/>
    </location>
</feature>
<feature type="repeat" description="WD 5">
    <location>
        <begin position="202"/>
        <end position="241"/>
    </location>
</feature>
<feature type="repeat" description="WD 6">
    <location>
        <begin position="243"/>
        <end position="282"/>
    </location>
</feature>
<feature type="repeat" description="WD 7">
    <location>
        <begin position="285"/>
        <end position="323"/>
    </location>
</feature>
<feature type="repeat" description="WD 8">
    <location>
        <begin position="358"/>
        <end position="399"/>
    </location>
</feature>
<feature type="repeat" description="WD 9">
    <location>
        <begin position="528"/>
        <end position="567"/>
    </location>
</feature>
<feature type="repeat" description="WD 10">
    <location>
        <begin position="910"/>
        <end position="953"/>
    </location>
</feature>
<feature type="region of interest" description="Disordered" evidence="2">
    <location>
        <begin position="820"/>
        <end position="885"/>
    </location>
</feature>
<feature type="compositionally biased region" description="Low complexity" evidence="2">
    <location>
        <begin position="844"/>
        <end position="857"/>
    </location>
</feature>
<keyword id="KW-0963">Cytoplasm</keyword>
<keyword id="KW-0931">ER-Golgi transport</keyword>
<keyword id="KW-0333">Golgi apparatus</keyword>
<keyword id="KW-0472">Membrane</keyword>
<keyword id="KW-0653">Protein transport</keyword>
<keyword id="KW-1185">Reference proteome</keyword>
<keyword id="KW-0677">Repeat</keyword>
<keyword id="KW-0813">Transport</keyword>
<keyword id="KW-0853">WD repeat</keyword>
<name>COPA_DICDI</name>
<accession>Q55FR9</accession>
<gene>
    <name type="primary">copa</name>
    <name type="ORF">DDB_G0267982</name>
</gene>
<organism>
    <name type="scientific">Dictyostelium discoideum</name>
    <name type="common">Social amoeba</name>
    <dbReference type="NCBI Taxonomy" id="44689"/>
    <lineage>
        <taxon>Eukaryota</taxon>
        <taxon>Amoebozoa</taxon>
        <taxon>Evosea</taxon>
        <taxon>Eumycetozoa</taxon>
        <taxon>Dictyostelia</taxon>
        <taxon>Dictyosteliales</taxon>
        <taxon>Dictyosteliaceae</taxon>
        <taxon>Dictyostelium</taxon>
    </lineage>
</organism>
<dbReference type="EMBL" id="AAFI02000003">
    <property type="protein sequence ID" value="EAL73444.1"/>
    <property type="molecule type" value="Genomic_DNA"/>
</dbReference>
<dbReference type="RefSeq" id="XP_647464.1">
    <property type="nucleotide sequence ID" value="XM_642372.1"/>
</dbReference>
<dbReference type="SMR" id="Q55FR9"/>
<dbReference type="FunCoup" id="Q55FR9">
    <property type="interactions" value="977"/>
</dbReference>
<dbReference type="STRING" id="44689.Q55FR9"/>
<dbReference type="GlyGen" id="Q55FR9">
    <property type="glycosylation" value="2 sites"/>
</dbReference>
<dbReference type="PaxDb" id="44689-DDB0233797"/>
<dbReference type="EnsemblProtists" id="EAL73444">
    <property type="protein sequence ID" value="EAL73444"/>
    <property type="gene ID" value="DDB_G0267982"/>
</dbReference>
<dbReference type="GeneID" id="8616271"/>
<dbReference type="KEGG" id="ddi:DDB_G0267982"/>
<dbReference type="dictyBase" id="DDB_G0267982">
    <property type="gene designation" value="copA"/>
</dbReference>
<dbReference type="VEuPathDB" id="AmoebaDB:DDB_G0267982"/>
<dbReference type="eggNOG" id="KOG0292">
    <property type="taxonomic scope" value="Eukaryota"/>
</dbReference>
<dbReference type="HOGENOM" id="CLU_007565_1_0_1"/>
<dbReference type="InParanoid" id="Q55FR9"/>
<dbReference type="OMA" id="EMTYQKQ"/>
<dbReference type="PhylomeDB" id="Q55FR9"/>
<dbReference type="Reactome" id="R-DDI-6807878">
    <property type="pathway name" value="COPI-mediated anterograde transport"/>
</dbReference>
<dbReference type="Reactome" id="R-DDI-6811434">
    <property type="pathway name" value="COPI-dependent Golgi-to-ER retrograde traffic"/>
</dbReference>
<dbReference type="PRO" id="PR:Q55FR9"/>
<dbReference type="Proteomes" id="UP000002195">
    <property type="component" value="Chromosome 1"/>
</dbReference>
<dbReference type="GO" id="GO:0030126">
    <property type="term" value="C:COPI vesicle coat"/>
    <property type="evidence" value="ECO:0000318"/>
    <property type="project" value="GO_Central"/>
</dbReference>
<dbReference type="GO" id="GO:0000139">
    <property type="term" value="C:Golgi membrane"/>
    <property type="evidence" value="ECO:0007669"/>
    <property type="project" value="UniProtKB-SubCell"/>
</dbReference>
<dbReference type="GO" id="GO:0005198">
    <property type="term" value="F:structural molecule activity"/>
    <property type="evidence" value="ECO:0007669"/>
    <property type="project" value="InterPro"/>
</dbReference>
<dbReference type="GO" id="GO:0006888">
    <property type="term" value="P:endoplasmic reticulum to Golgi vesicle-mediated transport"/>
    <property type="evidence" value="ECO:0000318"/>
    <property type="project" value="GO_Central"/>
</dbReference>
<dbReference type="GO" id="GO:0006891">
    <property type="term" value="P:intra-Golgi vesicle-mediated transport"/>
    <property type="evidence" value="ECO:0000318"/>
    <property type="project" value="GO_Central"/>
</dbReference>
<dbReference type="GO" id="GO:0006886">
    <property type="term" value="P:intracellular protein transport"/>
    <property type="evidence" value="ECO:0000318"/>
    <property type="project" value="GO_Central"/>
</dbReference>
<dbReference type="GO" id="GO:0006890">
    <property type="term" value="P:retrograde vesicle-mediated transport, Golgi to endoplasmic reticulum"/>
    <property type="evidence" value="ECO:0000318"/>
    <property type="project" value="GO_Central"/>
</dbReference>
<dbReference type="CDD" id="cd22948">
    <property type="entry name" value="Coatomer_WDAD_alpha"/>
    <property type="match status" value="1"/>
</dbReference>
<dbReference type="CDD" id="cd00200">
    <property type="entry name" value="WD40"/>
    <property type="match status" value="1"/>
</dbReference>
<dbReference type="FunFam" id="1.25.40.470:FF:000002">
    <property type="entry name" value="Coatomer subunit alpha"/>
    <property type="match status" value="1"/>
</dbReference>
<dbReference type="FunFam" id="2.130.10.10:FF:000010">
    <property type="entry name" value="Coatomer subunit alpha"/>
    <property type="match status" value="1"/>
</dbReference>
<dbReference type="Gene3D" id="1.25.40.470">
    <property type="match status" value="1"/>
</dbReference>
<dbReference type="Gene3D" id="2.130.10.10">
    <property type="entry name" value="YVTN repeat-like/Quinoprotein amine dehydrogenase"/>
    <property type="match status" value="2"/>
</dbReference>
<dbReference type="InterPro" id="IPR006692">
    <property type="entry name" value="Beta-prop_COPA/B_2nd"/>
</dbReference>
<dbReference type="InterPro" id="IPR047312">
    <property type="entry name" value="Coatomer_alpha_WD-assoc_reg"/>
</dbReference>
<dbReference type="InterPro" id="IPR016391">
    <property type="entry name" value="Coatomer_asu"/>
</dbReference>
<dbReference type="InterPro" id="IPR010714">
    <property type="entry name" value="Coatomer_asu_C"/>
</dbReference>
<dbReference type="InterPro" id="IPR050844">
    <property type="entry name" value="Coatomer_complex_subunit"/>
</dbReference>
<dbReference type="InterPro" id="IPR020472">
    <property type="entry name" value="G-protein_beta_WD-40_rep"/>
</dbReference>
<dbReference type="InterPro" id="IPR056176">
    <property type="entry name" value="TPR_COPA_B"/>
</dbReference>
<dbReference type="InterPro" id="IPR015943">
    <property type="entry name" value="WD40/YVTN_repeat-like_dom_sf"/>
</dbReference>
<dbReference type="InterPro" id="IPR019775">
    <property type="entry name" value="WD40_repeat_CS"/>
</dbReference>
<dbReference type="InterPro" id="IPR036322">
    <property type="entry name" value="WD40_repeat_dom_sf"/>
</dbReference>
<dbReference type="InterPro" id="IPR001680">
    <property type="entry name" value="WD40_rpt"/>
</dbReference>
<dbReference type="PANTHER" id="PTHR19876">
    <property type="entry name" value="COATOMER"/>
    <property type="match status" value="1"/>
</dbReference>
<dbReference type="PANTHER" id="PTHR19876:SF1">
    <property type="entry name" value="COATOMER SUBUNIT ALPHA"/>
    <property type="match status" value="1"/>
</dbReference>
<dbReference type="Pfam" id="PF04053">
    <property type="entry name" value="B-prop_COPA_B_2nd"/>
    <property type="match status" value="1"/>
</dbReference>
<dbReference type="Pfam" id="PF06957">
    <property type="entry name" value="COPI_C"/>
    <property type="match status" value="1"/>
</dbReference>
<dbReference type="Pfam" id="PF23953">
    <property type="entry name" value="TPR_COPA_B"/>
    <property type="match status" value="1"/>
</dbReference>
<dbReference type="Pfam" id="PF00400">
    <property type="entry name" value="WD40"/>
    <property type="match status" value="6"/>
</dbReference>
<dbReference type="PIRSF" id="PIRSF003354">
    <property type="entry name" value="Coatomer_alpha_subunit"/>
    <property type="match status" value="1"/>
</dbReference>
<dbReference type="PRINTS" id="PR00320">
    <property type="entry name" value="GPROTEINBRPT"/>
</dbReference>
<dbReference type="SMART" id="SM00320">
    <property type="entry name" value="WD40"/>
    <property type="match status" value="7"/>
</dbReference>
<dbReference type="SUPFAM" id="SSF50978">
    <property type="entry name" value="WD40 repeat-like"/>
    <property type="match status" value="2"/>
</dbReference>
<dbReference type="PROSITE" id="PS00678">
    <property type="entry name" value="WD_REPEATS_1"/>
    <property type="match status" value="1"/>
</dbReference>
<dbReference type="PROSITE" id="PS50082">
    <property type="entry name" value="WD_REPEATS_2"/>
    <property type="match status" value="5"/>
</dbReference>
<dbReference type="PROSITE" id="PS50294">
    <property type="entry name" value="WD_REPEATS_REGION"/>
    <property type="match status" value="1"/>
</dbReference>
<reference key="1">
    <citation type="journal article" date="2005" name="Nature">
        <title>The genome of the social amoeba Dictyostelium discoideum.</title>
        <authorList>
            <person name="Eichinger L."/>
            <person name="Pachebat J.A."/>
            <person name="Gloeckner G."/>
            <person name="Rajandream M.A."/>
            <person name="Sucgang R."/>
            <person name="Berriman M."/>
            <person name="Song J."/>
            <person name="Olsen R."/>
            <person name="Szafranski K."/>
            <person name="Xu Q."/>
            <person name="Tunggal B."/>
            <person name="Kummerfeld S."/>
            <person name="Madera M."/>
            <person name="Konfortov B.A."/>
            <person name="Rivero F."/>
            <person name="Bankier A.T."/>
            <person name="Lehmann R."/>
            <person name="Hamlin N."/>
            <person name="Davies R."/>
            <person name="Gaudet P."/>
            <person name="Fey P."/>
            <person name="Pilcher K."/>
            <person name="Chen G."/>
            <person name="Saunders D."/>
            <person name="Sodergren E.J."/>
            <person name="Davis P."/>
            <person name="Kerhornou A."/>
            <person name="Nie X."/>
            <person name="Hall N."/>
            <person name="Anjard C."/>
            <person name="Hemphill L."/>
            <person name="Bason N."/>
            <person name="Farbrother P."/>
            <person name="Desany B."/>
            <person name="Just E."/>
            <person name="Morio T."/>
            <person name="Rost R."/>
            <person name="Churcher C.M."/>
            <person name="Cooper J."/>
            <person name="Haydock S."/>
            <person name="van Driessche N."/>
            <person name="Cronin A."/>
            <person name="Goodhead I."/>
            <person name="Muzny D.M."/>
            <person name="Mourier T."/>
            <person name="Pain A."/>
            <person name="Lu M."/>
            <person name="Harper D."/>
            <person name="Lindsay R."/>
            <person name="Hauser H."/>
            <person name="James K.D."/>
            <person name="Quiles M."/>
            <person name="Madan Babu M."/>
            <person name="Saito T."/>
            <person name="Buchrieser C."/>
            <person name="Wardroper A."/>
            <person name="Felder M."/>
            <person name="Thangavelu M."/>
            <person name="Johnson D."/>
            <person name="Knights A."/>
            <person name="Loulseged H."/>
            <person name="Mungall K.L."/>
            <person name="Oliver K."/>
            <person name="Price C."/>
            <person name="Quail M.A."/>
            <person name="Urushihara H."/>
            <person name="Hernandez J."/>
            <person name="Rabbinowitsch E."/>
            <person name="Steffen D."/>
            <person name="Sanders M."/>
            <person name="Ma J."/>
            <person name="Kohara Y."/>
            <person name="Sharp S."/>
            <person name="Simmonds M.N."/>
            <person name="Spiegler S."/>
            <person name="Tivey A."/>
            <person name="Sugano S."/>
            <person name="White B."/>
            <person name="Walker D."/>
            <person name="Woodward J.R."/>
            <person name="Winckler T."/>
            <person name="Tanaka Y."/>
            <person name="Shaulsky G."/>
            <person name="Schleicher M."/>
            <person name="Weinstock G.M."/>
            <person name="Rosenthal A."/>
            <person name="Cox E.C."/>
            <person name="Chisholm R.L."/>
            <person name="Gibbs R.A."/>
            <person name="Loomis W.F."/>
            <person name="Platzer M."/>
            <person name="Kay R.R."/>
            <person name="Williams J.G."/>
            <person name="Dear P.H."/>
            <person name="Noegel A.A."/>
            <person name="Barrell B.G."/>
            <person name="Kuspa A."/>
        </authorList>
    </citation>
    <scope>NUCLEOTIDE SEQUENCE [LARGE SCALE GENOMIC DNA]</scope>
    <source>
        <strain>AX4</strain>
    </source>
</reference>
<proteinExistence type="inferred from homology"/>
<protein>
    <recommendedName>
        <fullName>Coatomer subunit alpha</fullName>
    </recommendedName>
    <alternativeName>
        <fullName>Alpha-coat protein</fullName>
        <shortName>Alpha-COP</shortName>
    </alternativeName>
</protein>
<sequence length="1221" mass="138855">MLYKFETKASRVKGLSFHPTRPWILASLHSGSIHLYDYRIKTLLEKFDEHEGPVRGINFHMTQPLFVSGGDDYKIKVWNYKQRRCLFTLKGHKDYIRSVEFHREAPWIVSSSDDMVIRIWNWQSRTCIAELNGHNHYVMSALFHPKDDLVVSASLDQTIRIWDISGLKKKMTTVKPYRENDPMRLQDELFGTDISVRLSLEGHDRGVNWASFHPTQPYIVSASDDHQVKLWRMNDPIVDTFRGHYNNVSCALFHPRQDLIISNSEDKTIRVWDIIKKSTVHMIRRDHDRFWTLASHPNQNLFAAGHDSGMIVFKLERERPLFVQNGDSGVFFLKKKNFNSFDFQAGRTVSLFHISKLPSNNGTQTMSYNQTERAILVSSDAEGGSYHLYKIPPKDSNTVNTKKGTGVAAIFVGRDRFAVLDKGNNVVIRDLENEEIKRCQIPFTIDWIYPSGSPGTILIQSEDKIHMFDIQQKKMLCEIQVHGVRYVIWSKDRNYVAFLTRDFIVLANKKLEQICMIHETVLPKSGVWDDNGVFIYSTSNHLKYLLQNGDNGTIRTLESTIYITGVKNNKVFAIDREFKNRIIEIDTTEYVLKLSLLQQNYNQVMTILRENRLVGKAIIAYLQKKGYPDVVHFVKDDRTRFNLALDAGNIDIALSSAKILDDKDCWNRLGVEALKQGNYQVVEMAYSRTSEFDRLSFLYLLVGNLSTLKKMISYESSDIMSRFHFSLYLGDVEERIKILQEAGLHQLAYITASIHGLTEKAESIGNLITSDGKSQLPQLPKQSYLLVPPSPINCNPNELNWPLLTTTKSVSDVMGENRFGVEQSTSTPTGDWESDEDIFSEGKSQQQSSQQQQQQQQKGDWEEDILIGDGNNGGGDDGGWERDDLKGLEKIGTDGFNNKQNDHVALFVPPQPGPSFSMIWARNSQFAVDHIAAGSFESAMNILNSQIGAVNFDPIKSMFMNIFMATRSSLGCNASTPSLLMPIQRKSAAPYITYGLGHLIERLKTNAYKSTTEGKFNDALSHFTYILHTIIFCSVDNKQEVNELKDLINICREYILGIKIELQRKELSIGAQKDSTLGRQAELAAYFTHCNLDPSHLILSLRSAMNCAYKVKHFNLAASFARRLISLNPNPDLATQAKKVFNFAQQTPTPSDIQQLNYDERNPFVICAHSYVPIYKGSPLIKCPYCSSCYLPTHKGKVCSVCQISEIGKDVQGLQVITIQK</sequence>
<evidence type="ECO:0000250" key="1"/>
<evidence type="ECO:0000256" key="2">
    <source>
        <dbReference type="SAM" id="MobiDB-lite"/>
    </source>
</evidence>